<reference evidence="4" key="1">
    <citation type="journal article" date="2009" name="BMC Evol. Biol.">
        <title>A proteomic approach for studying insect phylogeny: CAPA peptides of ancient insect taxa (Dictyoptera, Blattoptera) as a test case.</title>
        <authorList>
            <person name="Roth S."/>
            <person name="Fromm B."/>
            <person name="Gaede G."/>
            <person name="Predel R."/>
        </authorList>
    </citation>
    <scope>PROTEIN SEQUENCE</scope>
    <scope>AMIDATION AT VAL-11</scope>
    <source>
        <tissue evidence="2">Abdominal perisympathetic organs</tissue>
    </source>
</reference>
<accession>P85661</accession>
<keyword id="KW-0027">Amidation</keyword>
<keyword id="KW-0903">Direct protein sequencing</keyword>
<keyword id="KW-0527">Neuropeptide</keyword>
<keyword id="KW-0964">Secreted</keyword>
<comment type="function">
    <text evidence="4">Mediates visceral muscle contractile activity (myotropic activity).</text>
</comment>
<comment type="subcellular location">
    <subcellularLocation>
        <location evidence="4">Secreted</location>
    </subcellularLocation>
</comment>
<comment type="similarity">
    <text evidence="1">Belongs to the periviscerokinin family.</text>
</comment>
<organism>
    <name type="scientific">Lucihormetica grossei</name>
    <name type="common">Cockroach</name>
    <dbReference type="NCBI Taxonomy" id="521513"/>
    <lineage>
        <taxon>Eukaryota</taxon>
        <taxon>Metazoa</taxon>
        <taxon>Ecdysozoa</taxon>
        <taxon>Arthropoda</taxon>
        <taxon>Hexapoda</taxon>
        <taxon>Insecta</taxon>
        <taxon>Pterygota</taxon>
        <taxon>Neoptera</taxon>
        <taxon>Polyneoptera</taxon>
        <taxon>Dictyoptera</taxon>
        <taxon>Blattodea</taxon>
        <taxon>Blaberoidea</taxon>
        <taxon>Blaberidae</taxon>
        <taxon>Blaberinae</taxon>
        <taxon>Lucihormetica</taxon>
    </lineage>
</organism>
<sequence length="11" mass="1103">GSSGLISMPRV</sequence>
<evidence type="ECO:0000255" key="1"/>
<evidence type="ECO:0000269" key="2">
    <source>
    </source>
</evidence>
<evidence type="ECO:0000303" key="3">
    <source>
    </source>
</evidence>
<evidence type="ECO:0000305" key="4"/>
<proteinExistence type="evidence at protein level"/>
<dbReference type="GO" id="GO:0005576">
    <property type="term" value="C:extracellular region"/>
    <property type="evidence" value="ECO:0007669"/>
    <property type="project" value="UniProtKB-SubCell"/>
</dbReference>
<dbReference type="GO" id="GO:0007218">
    <property type="term" value="P:neuropeptide signaling pathway"/>
    <property type="evidence" value="ECO:0007669"/>
    <property type="project" value="UniProtKB-KW"/>
</dbReference>
<dbReference type="InterPro" id="IPR013231">
    <property type="entry name" value="Periviscerokinin"/>
</dbReference>
<dbReference type="Pfam" id="PF08259">
    <property type="entry name" value="Periviscerokin"/>
    <property type="match status" value="1"/>
</dbReference>
<feature type="peptide" id="PRO_0000378796" description="Periviscerokinin-2" evidence="2">
    <location>
        <begin position="1"/>
        <end position="11"/>
    </location>
</feature>
<feature type="modified residue" description="Valine amide" evidence="2">
    <location>
        <position position="11"/>
    </location>
</feature>
<name>PVK2_LUCGR</name>
<protein>
    <recommendedName>
        <fullName evidence="3">Periviscerokinin-2</fullName>
        <shortName evidence="3">LucGr-PVK-2</shortName>
    </recommendedName>
</protein>